<keyword id="KW-0044">Antibiotic</keyword>
<keyword id="KW-0929">Antimicrobial</keyword>
<keyword id="KW-1015">Disulfide bond</keyword>
<keyword id="KW-0964">Secreted</keyword>
<keyword id="KW-0732">Signal</keyword>
<evidence type="ECO:0000250" key="1">
    <source>
        <dbReference type="UniProtKB" id="P83952"/>
    </source>
</evidence>
<evidence type="ECO:0000255" key="2"/>
<evidence type="ECO:0000255" key="3">
    <source>
        <dbReference type="PROSITE-ProRule" id="PRU00722"/>
    </source>
</evidence>
<evidence type="ECO:0000303" key="4">
    <source>
    </source>
</evidence>
<evidence type="ECO:0000305" key="5"/>
<evidence type="ECO:0000305" key="6">
    <source>
    </source>
</evidence>
<reference key="1">
    <citation type="journal article" date="2008" name="Cell. Mol. Life Sci.">
        <title>Common evolution of waprin and Kunitz-like toxin families in Australian venomous snakes.</title>
        <authorList>
            <person name="St Pierre L."/>
            <person name="Earl S.T."/>
            <person name="Filippovich I."/>
            <person name="Sorokina N."/>
            <person name="Masci P.P."/>
            <person name="De Jersey J."/>
            <person name="Lavin M.F."/>
        </authorList>
    </citation>
    <scope>NUCLEOTIDE SEQUENCE [GENOMIC DNA]</scope>
    <source>
        <tissue>Venom gland</tissue>
    </source>
</reference>
<organism>
    <name type="scientific">Austrelaps superbus</name>
    <name type="common">Lowland copperhead snake</name>
    <name type="synonym">Hoplocephalus superbus</name>
    <dbReference type="NCBI Taxonomy" id="29156"/>
    <lineage>
        <taxon>Eukaryota</taxon>
        <taxon>Metazoa</taxon>
        <taxon>Chordata</taxon>
        <taxon>Craniata</taxon>
        <taxon>Vertebrata</taxon>
        <taxon>Euteleostomi</taxon>
        <taxon>Lepidosauria</taxon>
        <taxon>Squamata</taxon>
        <taxon>Bifurcata</taxon>
        <taxon>Unidentata</taxon>
        <taxon>Episquamata</taxon>
        <taxon>Toxicofera</taxon>
        <taxon>Serpentes</taxon>
        <taxon>Colubroidea</taxon>
        <taxon>Elapidae</taxon>
        <taxon>Hydrophiinae</taxon>
        <taxon>Austrelaps</taxon>
    </lineage>
</organism>
<comment type="function">
    <text evidence="1">Damages membranes of susceptible bacteria. Has no hemolytic activity. Not toxic to mice. Does not inhibit the proteinases elastase and cathepsin G.</text>
</comment>
<comment type="subcellular location">
    <subcellularLocation>
        <location evidence="6">Secreted</location>
    </subcellularLocation>
</comment>
<comment type="tissue specificity">
    <text evidence="6">Expressed by the venom gland.</text>
</comment>
<comment type="similarity">
    <text evidence="5">Belongs to the venom waprin family.</text>
</comment>
<feature type="signal peptide" evidence="2">
    <location>
        <begin position="1"/>
        <end position="24"/>
    </location>
</feature>
<feature type="chain" id="PRO_5000395632" description="Supwaprin-d">
    <location>
        <begin position="25"/>
        <end position="74"/>
    </location>
</feature>
<feature type="domain" description="WAP" evidence="3">
    <location>
        <begin position="27"/>
        <end position="71"/>
    </location>
</feature>
<feature type="disulfide bond" evidence="3">
    <location>
        <begin position="34"/>
        <end position="59"/>
    </location>
</feature>
<feature type="disulfide bond" evidence="3">
    <location>
        <begin position="42"/>
        <end position="63"/>
    </location>
</feature>
<feature type="disulfide bond" evidence="3">
    <location>
        <begin position="46"/>
        <end position="58"/>
    </location>
</feature>
<feature type="disulfide bond" evidence="3">
    <location>
        <begin position="52"/>
        <end position="67"/>
    </location>
</feature>
<dbReference type="EMBL" id="EU401832">
    <property type="protein sequence ID" value="ACC77781.1"/>
    <property type="molecule type" value="Genomic_DNA"/>
</dbReference>
<dbReference type="SMR" id="B5L5P4"/>
<dbReference type="GO" id="GO:0005576">
    <property type="term" value="C:extracellular region"/>
    <property type="evidence" value="ECO:0000250"/>
    <property type="project" value="UniProtKB"/>
</dbReference>
<dbReference type="GO" id="GO:0005615">
    <property type="term" value="C:extracellular space"/>
    <property type="evidence" value="ECO:0007669"/>
    <property type="project" value="TreeGrafter"/>
</dbReference>
<dbReference type="GO" id="GO:0004867">
    <property type="term" value="F:serine-type endopeptidase inhibitor activity"/>
    <property type="evidence" value="ECO:0007669"/>
    <property type="project" value="TreeGrafter"/>
</dbReference>
<dbReference type="GO" id="GO:0019731">
    <property type="term" value="P:antibacterial humoral response"/>
    <property type="evidence" value="ECO:0007669"/>
    <property type="project" value="TreeGrafter"/>
</dbReference>
<dbReference type="GO" id="GO:0045087">
    <property type="term" value="P:innate immune response"/>
    <property type="evidence" value="ECO:0007669"/>
    <property type="project" value="TreeGrafter"/>
</dbReference>
<dbReference type="GO" id="GO:0044278">
    <property type="term" value="P:venom-mediated disruption of cell wall in another organism"/>
    <property type="evidence" value="ECO:0000250"/>
    <property type="project" value="UniProtKB"/>
</dbReference>
<dbReference type="Gene3D" id="4.10.75.10">
    <property type="entry name" value="Elafin-like"/>
    <property type="match status" value="1"/>
</dbReference>
<dbReference type="InterPro" id="IPR036645">
    <property type="entry name" value="Elafin-like_sf"/>
</dbReference>
<dbReference type="InterPro" id="IPR008197">
    <property type="entry name" value="WAP_dom"/>
</dbReference>
<dbReference type="InterPro" id="IPR050514">
    <property type="entry name" value="WAP_four-disulfide_core"/>
</dbReference>
<dbReference type="PANTHER" id="PTHR19441:SF30">
    <property type="entry name" value="ELAFIN"/>
    <property type="match status" value="1"/>
</dbReference>
<dbReference type="PANTHER" id="PTHR19441">
    <property type="entry name" value="WHEY ACDIC PROTEIN WAP"/>
    <property type="match status" value="1"/>
</dbReference>
<dbReference type="Pfam" id="PF00095">
    <property type="entry name" value="WAP"/>
    <property type="match status" value="1"/>
</dbReference>
<dbReference type="PRINTS" id="PR00003">
    <property type="entry name" value="4DISULPHCORE"/>
</dbReference>
<dbReference type="SMART" id="SM00217">
    <property type="entry name" value="WAP"/>
    <property type="match status" value="1"/>
</dbReference>
<dbReference type="SUPFAM" id="SSF57256">
    <property type="entry name" value="Elafin-like"/>
    <property type="match status" value="1"/>
</dbReference>
<dbReference type="PROSITE" id="PS51390">
    <property type="entry name" value="WAP"/>
    <property type="match status" value="1"/>
</dbReference>
<protein>
    <recommendedName>
        <fullName evidence="4">Supwaprin-d</fullName>
    </recommendedName>
</protein>
<sequence>MSSGGLLLLLGLLTLWAEVTPISGQDRPKKPGLCPPRPQKPCVKECKNDWSCPGQQKCCNYGCIDECRDPIFVN</sequence>
<proteinExistence type="inferred from homology"/>
<name>WAPD_AUSSU</name>
<accession>B5L5P4</accession>